<protein>
    <recommendedName>
        <fullName evidence="6">OVARIAN TUMOR DOMAIN-containing deubiquitinating enzyme 10</fullName>
        <shortName evidence="6">OTU domain-containing protein 10</shortName>
        <ecNumber evidence="5">3.4.19.12</ecNumber>
    </recommendedName>
    <alternativeName>
        <fullName evidence="6">Deubiquitinating enzyme OTU10</fullName>
    </alternativeName>
</protein>
<name>OTU10_ARATH</name>
<evidence type="ECO:0000250" key="1">
    <source>
        <dbReference type="UniProtKB" id="Q96G74"/>
    </source>
</evidence>
<evidence type="ECO:0000255" key="2"/>
<evidence type="ECO:0000255" key="3">
    <source>
        <dbReference type="PROSITE-ProRule" id="PRU00139"/>
    </source>
</evidence>
<evidence type="ECO:0000256" key="4">
    <source>
        <dbReference type="SAM" id="MobiDB-lite"/>
    </source>
</evidence>
<evidence type="ECO:0000269" key="5">
    <source>
    </source>
</evidence>
<evidence type="ECO:0000303" key="6">
    <source>
    </source>
</evidence>
<evidence type="ECO:0000305" key="7"/>
<evidence type="ECO:0000305" key="8">
    <source>
    </source>
</evidence>
<evidence type="ECO:0000312" key="9">
    <source>
        <dbReference type="Araport" id="AT5G03330"/>
    </source>
</evidence>
<evidence type="ECO:0000312" key="10">
    <source>
        <dbReference type="EMBL" id="CAB83289.1"/>
    </source>
</evidence>
<reference key="1">
    <citation type="journal article" date="2014" name="Front. Plant Sci.">
        <title>Distinct phylogenetic relationships and biochemical properties of Arabidopsis ovarian tumor-related deubiquitinases support their functional differentiation.</title>
        <authorList>
            <person name="Radjacommare R."/>
            <person name="Usharani R."/>
            <person name="Kuo C.-H."/>
            <person name="Fu H."/>
        </authorList>
    </citation>
    <scope>NUCLEOTIDE SEQUENCE [MRNA] (ISOFORM 1)</scope>
    <scope>FUNCTION</scope>
    <scope>BIOPHYSICOCHEMICAL PROPERTIES</scope>
    <scope>CATALYTIC ACTIVITY</scope>
    <scope>GENE FAMILY</scope>
    <scope>NOMENCLATURE</scope>
    <source>
        <strain>cv. Columbia</strain>
    </source>
</reference>
<reference key="2">
    <citation type="journal article" date="2000" name="Nature">
        <title>Sequence and analysis of chromosome 5 of the plant Arabidopsis thaliana.</title>
        <authorList>
            <person name="Tabata S."/>
            <person name="Kaneko T."/>
            <person name="Nakamura Y."/>
            <person name="Kotani H."/>
            <person name="Kato T."/>
            <person name="Asamizu E."/>
            <person name="Miyajima N."/>
            <person name="Sasamoto S."/>
            <person name="Kimura T."/>
            <person name="Hosouchi T."/>
            <person name="Kawashima K."/>
            <person name="Kohara M."/>
            <person name="Matsumoto M."/>
            <person name="Matsuno A."/>
            <person name="Muraki A."/>
            <person name="Nakayama S."/>
            <person name="Nakazaki N."/>
            <person name="Naruo K."/>
            <person name="Okumura S."/>
            <person name="Shinpo S."/>
            <person name="Takeuchi C."/>
            <person name="Wada T."/>
            <person name="Watanabe A."/>
            <person name="Yamada M."/>
            <person name="Yasuda M."/>
            <person name="Sato S."/>
            <person name="de la Bastide M."/>
            <person name="Huang E."/>
            <person name="Spiegel L."/>
            <person name="Gnoj L."/>
            <person name="O'Shaughnessy A."/>
            <person name="Preston R."/>
            <person name="Habermann K."/>
            <person name="Murray J."/>
            <person name="Johnson D."/>
            <person name="Rohlfing T."/>
            <person name="Nelson J."/>
            <person name="Stoneking T."/>
            <person name="Pepin K."/>
            <person name="Spieth J."/>
            <person name="Sekhon M."/>
            <person name="Armstrong J."/>
            <person name="Becker M."/>
            <person name="Belter E."/>
            <person name="Cordum H."/>
            <person name="Cordes M."/>
            <person name="Courtney L."/>
            <person name="Courtney W."/>
            <person name="Dante M."/>
            <person name="Du H."/>
            <person name="Edwards J."/>
            <person name="Fryman J."/>
            <person name="Haakensen B."/>
            <person name="Lamar E."/>
            <person name="Latreille P."/>
            <person name="Leonard S."/>
            <person name="Meyer R."/>
            <person name="Mulvaney E."/>
            <person name="Ozersky P."/>
            <person name="Riley A."/>
            <person name="Strowmatt C."/>
            <person name="Wagner-McPherson C."/>
            <person name="Wollam A."/>
            <person name="Yoakum M."/>
            <person name="Bell M."/>
            <person name="Dedhia N."/>
            <person name="Parnell L."/>
            <person name="Shah R."/>
            <person name="Rodriguez M."/>
            <person name="Hoon See L."/>
            <person name="Vil D."/>
            <person name="Baker J."/>
            <person name="Kirchoff K."/>
            <person name="Toth K."/>
            <person name="King L."/>
            <person name="Bahret A."/>
            <person name="Miller B."/>
            <person name="Marra M.A."/>
            <person name="Martienssen R."/>
            <person name="McCombie W.R."/>
            <person name="Wilson R.K."/>
            <person name="Murphy G."/>
            <person name="Bancroft I."/>
            <person name="Volckaert G."/>
            <person name="Wambutt R."/>
            <person name="Duesterhoeft A."/>
            <person name="Stiekema W."/>
            <person name="Pohl T."/>
            <person name="Entian K.-D."/>
            <person name="Terryn N."/>
            <person name="Hartley N."/>
            <person name="Bent E."/>
            <person name="Johnson S."/>
            <person name="Langham S.-A."/>
            <person name="McCullagh B."/>
            <person name="Robben J."/>
            <person name="Grymonprez B."/>
            <person name="Zimmermann W."/>
            <person name="Ramsperger U."/>
            <person name="Wedler H."/>
            <person name="Balke K."/>
            <person name="Wedler E."/>
            <person name="Peters S."/>
            <person name="van Staveren M."/>
            <person name="Dirkse W."/>
            <person name="Mooijman P."/>
            <person name="Klein Lankhorst R."/>
            <person name="Weitzenegger T."/>
            <person name="Bothe G."/>
            <person name="Rose M."/>
            <person name="Hauf J."/>
            <person name="Berneiser S."/>
            <person name="Hempel S."/>
            <person name="Feldpausch M."/>
            <person name="Lamberth S."/>
            <person name="Villarroel R."/>
            <person name="Gielen J."/>
            <person name="Ardiles W."/>
            <person name="Bents O."/>
            <person name="Lemcke K."/>
            <person name="Kolesov G."/>
            <person name="Mayer K.F.X."/>
            <person name="Rudd S."/>
            <person name="Schoof H."/>
            <person name="Schueller C."/>
            <person name="Zaccaria P."/>
            <person name="Mewes H.-W."/>
            <person name="Bevan M."/>
            <person name="Fransz P.F."/>
        </authorList>
    </citation>
    <scope>NUCLEOTIDE SEQUENCE [LARGE SCALE GENOMIC DNA]</scope>
    <source>
        <strain>cv. Columbia</strain>
    </source>
</reference>
<reference key="3">
    <citation type="journal article" date="2017" name="Plant J.">
        <title>Araport11: a complete reannotation of the Arabidopsis thaliana reference genome.</title>
        <authorList>
            <person name="Cheng C.Y."/>
            <person name="Krishnakumar V."/>
            <person name="Chan A.P."/>
            <person name="Thibaud-Nissen F."/>
            <person name="Schobel S."/>
            <person name="Town C.D."/>
        </authorList>
    </citation>
    <scope>GENOME REANNOTATION</scope>
    <source>
        <strain>cv. Columbia</strain>
    </source>
</reference>
<reference key="4">
    <citation type="submission" date="2006-07" db="EMBL/GenBank/DDBJ databases">
        <title>Large-scale analysis of RIKEN Arabidopsis full-length (RAFL) cDNAs.</title>
        <authorList>
            <person name="Totoki Y."/>
            <person name="Seki M."/>
            <person name="Ishida J."/>
            <person name="Nakajima M."/>
            <person name="Enju A."/>
            <person name="Kamiya A."/>
            <person name="Narusaka M."/>
            <person name="Shin-i T."/>
            <person name="Nakagawa M."/>
            <person name="Sakamoto N."/>
            <person name="Oishi K."/>
            <person name="Kohara Y."/>
            <person name="Kobayashi M."/>
            <person name="Toyoda A."/>
            <person name="Sakaki Y."/>
            <person name="Sakurai T."/>
            <person name="Iida K."/>
            <person name="Akiyama K."/>
            <person name="Satou M."/>
            <person name="Toyoda T."/>
            <person name="Konagaya A."/>
            <person name="Carninci P."/>
            <person name="Kawai J."/>
            <person name="Hayashizaki Y."/>
            <person name="Shinozaki K."/>
        </authorList>
    </citation>
    <scope>NUCLEOTIDE SEQUENCE [LARGE SCALE MRNA] (ISOFORM 2)</scope>
    <source>
        <strain>cv. Columbia</strain>
    </source>
</reference>
<reference key="5">
    <citation type="submission" date="2007-01" db="EMBL/GenBank/DDBJ databases">
        <title>Arabidopsis ORF clones.</title>
        <authorList>
            <person name="Bautista V.R."/>
            <person name="Kim C.J."/>
            <person name="Chen H."/>
            <person name="Wu S.Y."/>
            <person name="De Los Reyes C."/>
            <person name="Ecker J.R."/>
        </authorList>
    </citation>
    <scope>NUCLEOTIDE SEQUENCE [LARGE SCALE MRNA] (ISOFORM 1)</scope>
    <source>
        <strain>cv. Columbia</strain>
    </source>
</reference>
<sequence>MVSHEENTSIVEWFLGPHPYTYPPYGIEMIHEDDEVAVAHHHHHHQSGEYYREYEDHRSSDVDNDEIIARTLQDDFLQLEIAESNDYSHQNQQQQHQQEGYTNNYSNNNNGYAWNDQSPAVDYSSEWIGNDNDQDGRSDDSVNVFSCSSPSDTDEYVYSWESDQCDADGEFGRRLNQMVPIPYIPKINGEIPPEEEAVSDHERLRNRLEMFDFTEVKVPGDGNCQFRALADQLYKTADRHKHVRRQIVKQLKSRPDSYQGYVPMDFSDYLRKMSRSGEWGDHVTLQAAADAYRVKIVVLTSFKDTCYIEILPTSQESKGVIFLSFWAEVHYNAIYLNRDTSETELQRKRKWWRFGN</sequence>
<comment type="function">
    <text evidence="5 8">Hydrolase that can remove conjugated ubiquitin from proteins in vitro and may therefore play an important regulatory role at the level of protein turnover by preventing degradation (Probable). Cysteine protease with a preference for 'Lys-63' over 'Lys-48' over 'Met-1' -linked ubiquitin (UB) tetramers as substrates (PubMed:24659992). Also cleaves RUB-GST fusion (PubMed:24659992).</text>
</comment>
<comment type="catalytic activity">
    <reaction evidence="5">
        <text>Thiol-dependent hydrolysis of ester, thioester, amide, peptide and isopeptide bonds formed by the C-terminal Gly of ubiquitin (a 76-residue protein attached to proteins as an intracellular targeting signal).</text>
        <dbReference type="EC" id="3.4.19.12"/>
    </reaction>
</comment>
<comment type="biophysicochemical properties">
    <phDependence>
        <text evidence="5">Optimum pH is 7.</text>
    </phDependence>
</comment>
<comment type="alternative products">
    <event type="alternative splicing"/>
    <isoform>
        <id>Q9LZF7-1</id>
        <name>1</name>
        <sequence type="displayed"/>
    </isoform>
    <isoform>
        <id>Q9LZF7-2</id>
        <name>2</name>
        <sequence type="described" ref="VSP_060265 VSP_060266"/>
    </isoform>
</comment>
<comment type="similarity">
    <text evidence="7">Belongs to the peptidase C85 family.</text>
</comment>
<feature type="chain" id="PRO_0000447760" description="OVARIAN TUMOR DOMAIN-containing deubiquitinating enzyme 10">
    <location>
        <begin position="1"/>
        <end position="356"/>
    </location>
</feature>
<feature type="domain" description="OTU" evidence="3">
    <location>
        <begin position="213"/>
        <end position="337"/>
    </location>
</feature>
<feature type="region of interest" description="Disordered" evidence="4">
    <location>
        <begin position="86"/>
        <end position="117"/>
    </location>
</feature>
<feature type="compositionally biased region" description="Low complexity" evidence="4">
    <location>
        <begin position="89"/>
        <end position="115"/>
    </location>
</feature>
<feature type="active site" evidence="2">
    <location>
        <position position="221"/>
    </location>
</feature>
<feature type="active site" description="Nucleophile" evidence="1">
    <location>
        <position position="224"/>
    </location>
</feature>
<feature type="active site" evidence="1">
    <location>
        <position position="330"/>
    </location>
</feature>
<feature type="splice variant" id="VSP_060265" description="In isoform 2.">
    <original>LEMFDFTEVKVPGDGN</original>
    <variation>YLFLLILCFLSYINHS</variation>
    <location>
        <begin position="208"/>
        <end position="223"/>
    </location>
</feature>
<feature type="splice variant" id="VSP_060266" description="In isoform 2.">
    <location>
        <begin position="224"/>
        <end position="356"/>
    </location>
</feature>
<organism>
    <name type="scientific">Arabidopsis thaliana</name>
    <name type="common">Mouse-ear cress</name>
    <dbReference type="NCBI Taxonomy" id="3702"/>
    <lineage>
        <taxon>Eukaryota</taxon>
        <taxon>Viridiplantae</taxon>
        <taxon>Streptophyta</taxon>
        <taxon>Embryophyta</taxon>
        <taxon>Tracheophyta</taxon>
        <taxon>Spermatophyta</taxon>
        <taxon>Magnoliopsida</taxon>
        <taxon>eudicotyledons</taxon>
        <taxon>Gunneridae</taxon>
        <taxon>Pentapetalae</taxon>
        <taxon>rosids</taxon>
        <taxon>malvids</taxon>
        <taxon>Brassicales</taxon>
        <taxon>Brassicaceae</taxon>
        <taxon>Camelineae</taxon>
        <taxon>Arabidopsis</taxon>
    </lineage>
</organism>
<keyword id="KW-0025">Alternative splicing</keyword>
<keyword id="KW-0378">Hydrolase</keyword>
<keyword id="KW-1185">Reference proteome</keyword>
<keyword id="KW-0833">Ubl conjugation pathway</keyword>
<gene>
    <name evidence="6" type="primary">OTU10</name>
    <name evidence="9" type="ordered locus">At5g03330</name>
    <name evidence="10" type="ORF">F12E4.60</name>
</gene>
<accession>Q9LZF7</accession>
<accession>Q0WP26</accession>
<dbReference type="EC" id="3.4.19.12" evidence="5"/>
<dbReference type="EMBL" id="JQ013456">
    <property type="protein sequence ID" value="AFS88958.1"/>
    <property type="molecule type" value="mRNA"/>
</dbReference>
<dbReference type="EMBL" id="AL162751">
    <property type="protein sequence ID" value="CAB83289.1"/>
    <property type="molecule type" value="Genomic_DNA"/>
</dbReference>
<dbReference type="EMBL" id="CP002688">
    <property type="protein sequence ID" value="AED90585.1"/>
    <property type="molecule type" value="Genomic_DNA"/>
</dbReference>
<dbReference type="EMBL" id="CP002688">
    <property type="protein sequence ID" value="AED90586.1"/>
    <property type="molecule type" value="Genomic_DNA"/>
</dbReference>
<dbReference type="EMBL" id="AK229259">
    <property type="protein sequence ID" value="BAF01123.1"/>
    <property type="molecule type" value="mRNA"/>
</dbReference>
<dbReference type="EMBL" id="BT030018">
    <property type="protein sequence ID" value="ABN04756.1"/>
    <property type="molecule type" value="mRNA"/>
</dbReference>
<dbReference type="PIR" id="T48354">
    <property type="entry name" value="T48354"/>
</dbReference>
<dbReference type="RefSeq" id="NP_195953.1">
    <molecule id="Q9LZF7-1"/>
    <property type="nucleotide sequence ID" value="NM_120411.5"/>
</dbReference>
<dbReference type="RefSeq" id="NP_974725.1">
    <molecule id="Q9LZF7-1"/>
    <property type="nucleotide sequence ID" value="NM_202996.2"/>
</dbReference>
<dbReference type="SMR" id="Q9LZF7"/>
<dbReference type="FunCoup" id="Q9LZF7">
    <property type="interactions" value="19"/>
</dbReference>
<dbReference type="STRING" id="3702.Q9LZF7"/>
<dbReference type="MEROPS" id="C85.A04"/>
<dbReference type="iPTMnet" id="Q9LZF7"/>
<dbReference type="PaxDb" id="3702-AT5G03330.1"/>
<dbReference type="ProteomicsDB" id="174760">
    <molecule id="Q9LZF7-1"/>
</dbReference>
<dbReference type="DNASU" id="831875"/>
<dbReference type="EnsemblPlants" id="AT5G03330.1">
    <molecule id="Q9LZF7-1"/>
    <property type="protein sequence ID" value="AT5G03330.1"/>
    <property type="gene ID" value="AT5G03330"/>
</dbReference>
<dbReference type="EnsemblPlants" id="AT5G03330.2">
    <molecule id="Q9LZF7-1"/>
    <property type="protein sequence ID" value="AT5G03330.2"/>
    <property type="gene ID" value="AT5G03330"/>
</dbReference>
<dbReference type="GeneID" id="831875"/>
<dbReference type="Gramene" id="AT5G03330.1">
    <molecule id="Q9LZF7-1"/>
    <property type="protein sequence ID" value="AT5G03330.1"/>
    <property type="gene ID" value="AT5G03330"/>
</dbReference>
<dbReference type="Gramene" id="AT5G03330.2">
    <molecule id="Q9LZF7-1"/>
    <property type="protein sequence ID" value="AT5G03330.2"/>
    <property type="gene ID" value="AT5G03330"/>
</dbReference>
<dbReference type="KEGG" id="ath:AT5G03330"/>
<dbReference type="Araport" id="AT5G03330"/>
<dbReference type="TAIR" id="AT5G03330"/>
<dbReference type="eggNOG" id="KOG2605">
    <property type="taxonomic scope" value="Eukaryota"/>
</dbReference>
<dbReference type="HOGENOM" id="CLU_044001_0_0_1"/>
<dbReference type="InParanoid" id="Q9LZF7"/>
<dbReference type="OMA" id="EDEAHQH"/>
<dbReference type="PhylomeDB" id="Q9LZF7"/>
<dbReference type="PRO" id="PR:Q9LZF7"/>
<dbReference type="Proteomes" id="UP000006548">
    <property type="component" value="Chromosome 5"/>
</dbReference>
<dbReference type="ExpressionAtlas" id="Q9LZF7">
    <property type="expression patterns" value="baseline and differential"/>
</dbReference>
<dbReference type="GO" id="GO:0004843">
    <property type="term" value="F:cysteine-type deubiquitinase activity"/>
    <property type="evidence" value="ECO:0007669"/>
    <property type="project" value="UniProtKB-EC"/>
</dbReference>
<dbReference type="CDD" id="cd22751">
    <property type="entry name" value="OTU_plant_OTU9-like"/>
    <property type="match status" value="1"/>
</dbReference>
<dbReference type="FunFam" id="3.90.70.80:FF:000001">
    <property type="entry name" value="OTU domain-containing protein"/>
    <property type="match status" value="1"/>
</dbReference>
<dbReference type="Gene3D" id="3.90.70.80">
    <property type="match status" value="1"/>
</dbReference>
<dbReference type="InterPro" id="IPR003323">
    <property type="entry name" value="OTU_dom"/>
</dbReference>
<dbReference type="InterPro" id="IPR038765">
    <property type="entry name" value="Papain-like_cys_pep_sf"/>
</dbReference>
<dbReference type="InterPro" id="IPR050704">
    <property type="entry name" value="Peptidase_C85-like"/>
</dbReference>
<dbReference type="PANTHER" id="PTHR12419">
    <property type="entry name" value="OTU DOMAIN CONTAINING PROTEIN"/>
    <property type="match status" value="1"/>
</dbReference>
<dbReference type="PANTHER" id="PTHR12419:SF103">
    <property type="entry name" value="OVARIAN TUMOR DOMAIN-CONTAINING DEUBIQUITINATING ENZYME 10-RELATED"/>
    <property type="match status" value="1"/>
</dbReference>
<dbReference type="Pfam" id="PF02338">
    <property type="entry name" value="OTU"/>
    <property type="match status" value="1"/>
</dbReference>
<dbReference type="SUPFAM" id="SSF54001">
    <property type="entry name" value="Cysteine proteinases"/>
    <property type="match status" value="1"/>
</dbReference>
<dbReference type="PROSITE" id="PS50802">
    <property type="entry name" value="OTU"/>
    <property type="match status" value="1"/>
</dbReference>
<proteinExistence type="evidence at protein level"/>